<protein>
    <recommendedName>
        <fullName>Beta-defensin 110</fullName>
    </recommendedName>
    <alternativeName>
        <fullName>Defensin, beta 110</fullName>
    </alternativeName>
</protein>
<gene>
    <name type="primary">DEFB110</name>
    <name type="synonym">CBD110</name>
</gene>
<accession>Q30KU3</accession>
<organism>
    <name type="scientific">Canis lupus familiaris</name>
    <name type="common">Dog</name>
    <name type="synonym">Canis familiaris</name>
    <dbReference type="NCBI Taxonomy" id="9615"/>
    <lineage>
        <taxon>Eukaryota</taxon>
        <taxon>Metazoa</taxon>
        <taxon>Chordata</taxon>
        <taxon>Craniata</taxon>
        <taxon>Vertebrata</taxon>
        <taxon>Euteleostomi</taxon>
        <taxon>Mammalia</taxon>
        <taxon>Eutheria</taxon>
        <taxon>Laurasiatheria</taxon>
        <taxon>Carnivora</taxon>
        <taxon>Caniformia</taxon>
        <taxon>Canidae</taxon>
        <taxon>Canis</taxon>
    </lineage>
</organism>
<keyword id="KW-0044">Antibiotic</keyword>
<keyword id="KW-0929">Antimicrobial</keyword>
<keyword id="KW-0211">Defensin</keyword>
<keyword id="KW-1015">Disulfide bond</keyword>
<keyword id="KW-1185">Reference proteome</keyword>
<keyword id="KW-0964">Secreted</keyword>
<keyword id="KW-0732">Signal</keyword>
<dbReference type="EMBL" id="DQ011979">
    <property type="protein sequence ID" value="AAY59717.1"/>
    <property type="molecule type" value="mRNA"/>
</dbReference>
<dbReference type="SMR" id="Q30KU3"/>
<dbReference type="InParanoid" id="Q30KU3"/>
<dbReference type="OrthoDB" id="9827999at2759"/>
<dbReference type="Proteomes" id="UP000002254">
    <property type="component" value="Unplaced"/>
</dbReference>
<dbReference type="Proteomes" id="UP000694429">
    <property type="component" value="Unplaced"/>
</dbReference>
<dbReference type="Proteomes" id="UP000694542">
    <property type="component" value="Unplaced"/>
</dbReference>
<dbReference type="Proteomes" id="UP000805418">
    <property type="component" value="Unplaced"/>
</dbReference>
<dbReference type="GO" id="GO:0005615">
    <property type="term" value="C:extracellular space"/>
    <property type="evidence" value="ECO:0000318"/>
    <property type="project" value="GO_Central"/>
</dbReference>
<dbReference type="GO" id="GO:0031731">
    <property type="term" value="F:CCR6 chemokine receptor binding"/>
    <property type="evidence" value="ECO:0000318"/>
    <property type="project" value="GO_Central"/>
</dbReference>
<dbReference type="GO" id="GO:0042056">
    <property type="term" value="F:chemoattractant activity"/>
    <property type="evidence" value="ECO:0000318"/>
    <property type="project" value="GO_Central"/>
</dbReference>
<dbReference type="GO" id="GO:0060326">
    <property type="term" value="P:cell chemotaxis"/>
    <property type="evidence" value="ECO:0000318"/>
    <property type="project" value="GO_Central"/>
</dbReference>
<dbReference type="GO" id="GO:0042742">
    <property type="term" value="P:defense response to bacterium"/>
    <property type="evidence" value="ECO:0000318"/>
    <property type="project" value="GO_Central"/>
</dbReference>
<dbReference type="GO" id="GO:0045087">
    <property type="term" value="P:innate immune response"/>
    <property type="evidence" value="ECO:0007669"/>
    <property type="project" value="InterPro"/>
</dbReference>
<dbReference type="InterPro" id="IPR025933">
    <property type="entry name" value="Beta_defensin_dom"/>
</dbReference>
<dbReference type="PANTHER" id="PTHR20515">
    <property type="entry name" value="BETA-DEFENSIN"/>
    <property type="match status" value="1"/>
</dbReference>
<dbReference type="PANTHER" id="PTHR20515:SF19">
    <property type="entry name" value="BETA-DEFENSIN 110"/>
    <property type="match status" value="1"/>
</dbReference>
<dbReference type="Pfam" id="PF13841">
    <property type="entry name" value="Defensin_beta_2"/>
    <property type="match status" value="1"/>
</dbReference>
<comment type="function">
    <text evidence="1">Has antibacterial activity.</text>
</comment>
<comment type="subcellular location">
    <subcellularLocation>
        <location evidence="1">Secreted</location>
    </subcellularLocation>
</comment>
<comment type="similarity">
    <text evidence="3">Belongs to the beta-defensin family.</text>
</comment>
<evidence type="ECO:0000250" key="1"/>
<evidence type="ECO:0000255" key="2"/>
<evidence type="ECO:0000305" key="3"/>
<feature type="signal peptide" evidence="2">
    <location>
        <begin position="1"/>
        <end position="21"/>
    </location>
</feature>
<feature type="chain" id="PRO_0000290786" description="Beta-defensin 110">
    <location>
        <begin position="22"/>
        <end position="62"/>
    </location>
</feature>
<feature type="disulfide bond" evidence="1">
    <location>
        <begin position="32"/>
        <end position="60"/>
    </location>
</feature>
<feature type="disulfide bond" evidence="1">
    <location>
        <begin position="39"/>
        <end position="53"/>
    </location>
</feature>
<feature type="disulfide bond" evidence="1">
    <location>
        <begin position="43"/>
        <end position="61"/>
    </location>
</feature>
<name>DB110_CANLF</name>
<proteinExistence type="inferred from homology"/>
<sequence>MKIHLFFFILLFWVTILPARSNFDPKYRFERCAKVKGICKTFCDDDEYDYGYCIKWRNQCCI</sequence>
<reference key="1">
    <citation type="journal article" date="2005" name="Physiol. Genomics">
        <title>Cross-species analysis of the mammalian beta-defensin gene family: presence of syntenic gene clusters and preferential expression in the male reproductive tract.</title>
        <authorList>
            <person name="Patil A.A."/>
            <person name="Cai Y."/>
            <person name="Sang Y."/>
            <person name="Blecha F."/>
            <person name="Zhang G."/>
        </authorList>
    </citation>
    <scope>NUCLEOTIDE SEQUENCE [MRNA]</scope>
</reference>